<feature type="chain" id="PRO_0000206730" description="Vesicle-associated membrane protein 3">
    <location>
        <begin position="1"/>
        <end position="103"/>
    </location>
</feature>
<feature type="topological domain" description="Cytoplasmic" evidence="3">
    <location>
        <begin position="1"/>
        <end position="81"/>
    </location>
</feature>
<feature type="transmembrane region" description="Helical; Anchor for type IV membrane protein" evidence="3">
    <location>
        <begin position="82"/>
        <end position="102"/>
    </location>
</feature>
<feature type="topological domain" description="Vesicular" evidence="3">
    <location>
        <position position="103"/>
    </location>
</feature>
<feature type="domain" description="v-SNARE coiled-coil homology" evidence="4">
    <location>
        <begin position="18"/>
        <end position="78"/>
    </location>
</feature>
<feature type="region of interest" description="Disordered" evidence="5">
    <location>
        <begin position="1"/>
        <end position="25"/>
    </location>
</feature>
<feature type="site" description="(Microbial infection) Cleavage; by C.botulinum neurotoxin type F (BoNT/F, botF)" evidence="6">
    <location>
        <begin position="44"/>
        <end position="45"/>
    </location>
</feature>
<feature type="site" description="(Microbial infection) Cleavage; by C.botulinum neurotoxin type D (BoNT/D, botD)" evidence="6">
    <location>
        <begin position="46"/>
        <end position="47"/>
    </location>
</feature>
<feature type="site" description="(Microbial infection) Cleavage; by C.tetani toxin (tetX)" evidence="6">
    <location>
        <begin position="63"/>
        <end position="64"/>
    </location>
</feature>
<feature type="cross-link" description="Glycyl lysine isopeptide (Lys-Gly) (interchain with G-Cter in ubiquitin)" evidence="2">
    <location>
        <position position="70"/>
    </location>
</feature>
<feature type="cross-link" description="Glycyl lysine isopeptide (Lys-Gly) (interchain with G-Cter in ubiquitin)" evidence="2">
    <location>
        <position position="72"/>
    </location>
</feature>
<feature type="cross-link" description="Glycyl lysine isopeptide (Lys-Gly) (interchain with G-Cter in ubiquitin)" evidence="2">
    <location>
        <position position="81"/>
    </location>
</feature>
<feature type="helix" evidence="10">
    <location>
        <begin position="15"/>
        <end position="75"/>
    </location>
</feature>
<dbReference type="EMBL" id="S63830">
    <property type="protein sequence ID" value="AAB27554.1"/>
    <property type="molecule type" value="mRNA"/>
</dbReference>
<dbReference type="EMBL" id="BC088119">
    <property type="protein sequence ID" value="AAH88119.1"/>
    <property type="molecule type" value="mRNA"/>
</dbReference>
<dbReference type="PIR" id="S35077">
    <property type="entry name" value="S35077"/>
</dbReference>
<dbReference type="RefSeq" id="NP_476438.1">
    <property type="nucleotide sequence ID" value="NM_057097.2"/>
</dbReference>
<dbReference type="PDB" id="5KJ7">
    <property type="method" value="X-ray"/>
    <property type="resolution" value="3.50 A"/>
    <property type="chains" value="A/G=14-76"/>
</dbReference>
<dbReference type="PDB" id="5KJ8">
    <property type="method" value="X-ray"/>
    <property type="resolution" value="4.10 A"/>
    <property type="chains" value="A/G=14-76"/>
</dbReference>
<dbReference type="PDBsum" id="5KJ7"/>
<dbReference type="PDBsum" id="5KJ8"/>
<dbReference type="BMRB" id="P63025"/>
<dbReference type="SMR" id="P63025"/>
<dbReference type="BioGRID" id="248164">
    <property type="interactions" value="2"/>
</dbReference>
<dbReference type="CORUM" id="P63025"/>
<dbReference type="FunCoup" id="P63025">
    <property type="interactions" value="1641"/>
</dbReference>
<dbReference type="IntAct" id="P63025">
    <property type="interactions" value="5"/>
</dbReference>
<dbReference type="MINT" id="P63025"/>
<dbReference type="STRING" id="10116.ENSRNOP00000048364"/>
<dbReference type="iPTMnet" id="P63025"/>
<dbReference type="PhosphoSitePlus" id="P63025"/>
<dbReference type="SwissPalm" id="P63025"/>
<dbReference type="jPOST" id="P63025"/>
<dbReference type="PaxDb" id="10116-ENSRNOP00000048364"/>
<dbReference type="GeneID" id="29528"/>
<dbReference type="KEGG" id="rno:29528"/>
<dbReference type="UCSC" id="RGD:61880">
    <property type="organism name" value="rat"/>
</dbReference>
<dbReference type="AGR" id="RGD:61880"/>
<dbReference type="CTD" id="9341"/>
<dbReference type="RGD" id="61880">
    <property type="gene designation" value="Vamp3"/>
</dbReference>
<dbReference type="VEuPathDB" id="HostDB:ENSRNOG00000030055"/>
<dbReference type="eggNOG" id="KOG0860">
    <property type="taxonomic scope" value="Eukaryota"/>
</dbReference>
<dbReference type="HOGENOM" id="CLU_064620_4_1_1"/>
<dbReference type="InParanoid" id="P63025"/>
<dbReference type="OrthoDB" id="80840at9989"/>
<dbReference type="PhylomeDB" id="P63025"/>
<dbReference type="TreeFam" id="TF313666"/>
<dbReference type="Reactome" id="R-RNO-1236974">
    <property type="pathway name" value="ER-Phagosome pathway"/>
</dbReference>
<dbReference type="Reactome" id="R-RNO-6811440">
    <property type="pathway name" value="Retrograde transport at the Trans-Golgi-Network"/>
</dbReference>
<dbReference type="Reactome" id="R-RNO-8856825">
    <property type="pathway name" value="Cargo recognition for clathrin-mediated endocytosis"/>
</dbReference>
<dbReference type="Reactome" id="R-RNO-8856828">
    <property type="pathway name" value="Clathrin-mediated endocytosis"/>
</dbReference>
<dbReference type="Reactome" id="R-RNO-8980692">
    <property type="pathway name" value="RHOA GTPase cycle"/>
</dbReference>
<dbReference type="Reactome" id="R-RNO-9013026">
    <property type="pathway name" value="RHOB GTPase cycle"/>
</dbReference>
<dbReference type="Reactome" id="R-RNO-9013149">
    <property type="pathway name" value="RAC1 GTPase cycle"/>
</dbReference>
<dbReference type="Reactome" id="R-RNO-9013404">
    <property type="pathway name" value="RAC2 GTPase cycle"/>
</dbReference>
<dbReference type="Reactome" id="R-RNO-9013405">
    <property type="pathway name" value="RHOD GTPase cycle"/>
</dbReference>
<dbReference type="Reactome" id="R-RNO-9013406">
    <property type="pathway name" value="RHOQ GTPase cycle"/>
</dbReference>
<dbReference type="Reactome" id="R-RNO-9013407">
    <property type="pathway name" value="RHOH GTPase cycle"/>
</dbReference>
<dbReference type="Reactome" id="R-RNO-9013408">
    <property type="pathway name" value="RHOG GTPase cycle"/>
</dbReference>
<dbReference type="Reactome" id="R-RNO-9035034">
    <property type="pathway name" value="RHOF GTPase cycle"/>
</dbReference>
<dbReference type="PRO" id="PR:P63025"/>
<dbReference type="Proteomes" id="UP000002494">
    <property type="component" value="Chromosome 5"/>
</dbReference>
<dbReference type="Bgee" id="ENSRNOG00000030055">
    <property type="expression patterns" value="Expressed in duodenum and 19 other cell types or tissues"/>
</dbReference>
<dbReference type="GO" id="GO:0016324">
    <property type="term" value="C:apical plasma membrane"/>
    <property type="evidence" value="ECO:0000314"/>
    <property type="project" value="RGD"/>
</dbReference>
<dbReference type="GO" id="GO:0009986">
    <property type="term" value="C:cell surface"/>
    <property type="evidence" value="ECO:0000266"/>
    <property type="project" value="RGD"/>
</dbReference>
<dbReference type="GO" id="GO:0030136">
    <property type="term" value="C:clathrin-coated vesicle"/>
    <property type="evidence" value="ECO:0000266"/>
    <property type="project" value="RGD"/>
</dbReference>
<dbReference type="GO" id="GO:0030665">
    <property type="term" value="C:clathrin-coated vesicle membrane"/>
    <property type="evidence" value="ECO:0000314"/>
    <property type="project" value="RGD"/>
</dbReference>
<dbReference type="GO" id="GO:0031410">
    <property type="term" value="C:cytoplasmic vesicle"/>
    <property type="evidence" value="ECO:0000266"/>
    <property type="project" value="RGD"/>
</dbReference>
<dbReference type="GO" id="GO:0005829">
    <property type="term" value="C:cytosol"/>
    <property type="evidence" value="ECO:0000266"/>
    <property type="project" value="RGD"/>
</dbReference>
<dbReference type="GO" id="GO:0005769">
    <property type="term" value="C:early endosome"/>
    <property type="evidence" value="ECO:0000266"/>
    <property type="project" value="RGD"/>
</dbReference>
<dbReference type="GO" id="GO:0031901">
    <property type="term" value="C:early endosome membrane"/>
    <property type="evidence" value="ECO:0007669"/>
    <property type="project" value="UniProtKB-SubCell"/>
</dbReference>
<dbReference type="GO" id="GO:0043231">
    <property type="term" value="C:intracellular membrane-bounded organelle"/>
    <property type="evidence" value="ECO:0000266"/>
    <property type="project" value="RGD"/>
</dbReference>
<dbReference type="GO" id="GO:0097708">
    <property type="term" value="C:intracellular vesicle"/>
    <property type="evidence" value="ECO:0000314"/>
    <property type="project" value="CACAO"/>
</dbReference>
<dbReference type="GO" id="GO:0043005">
    <property type="term" value="C:neuron projection"/>
    <property type="evidence" value="ECO:0007669"/>
    <property type="project" value="UniProtKB-KW"/>
</dbReference>
<dbReference type="GO" id="GO:0048471">
    <property type="term" value="C:perinuclear region of cytoplasm"/>
    <property type="evidence" value="ECO:0000266"/>
    <property type="project" value="RGD"/>
</dbReference>
<dbReference type="GO" id="GO:0045335">
    <property type="term" value="C:phagocytic vesicle"/>
    <property type="evidence" value="ECO:0000266"/>
    <property type="project" value="RGD"/>
</dbReference>
<dbReference type="GO" id="GO:0005886">
    <property type="term" value="C:plasma membrane"/>
    <property type="evidence" value="ECO:0000250"/>
    <property type="project" value="UniProtKB"/>
</dbReference>
<dbReference type="GO" id="GO:0055037">
    <property type="term" value="C:recycling endosome"/>
    <property type="evidence" value="ECO:0000314"/>
    <property type="project" value="RGD"/>
</dbReference>
<dbReference type="GO" id="GO:0055038">
    <property type="term" value="C:recycling endosome membrane"/>
    <property type="evidence" value="ECO:0007669"/>
    <property type="project" value="UniProtKB-SubCell"/>
</dbReference>
<dbReference type="GO" id="GO:0030141">
    <property type="term" value="C:secretory granule"/>
    <property type="evidence" value="ECO:0000266"/>
    <property type="project" value="RGD"/>
</dbReference>
<dbReference type="GO" id="GO:0031201">
    <property type="term" value="C:SNARE complex"/>
    <property type="evidence" value="ECO:0000314"/>
    <property type="project" value="RGD"/>
</dbReference>
<dbReference type="GO" id="GO:0030672">
    <property type="term" value="C:synaptic vesicle membrane"/>
    <property type="evidence" value="ECO:0000314"/>
    <property type="project" value="SynGO"/>
</dbReference>
<dbReference type="GO" id="GO:0005484">
    <property type="term" value="F:SNAP receptor activity"/>
    <property type="evidence" value="ECO:0000318"/>
    <property type="project" value="GO_Central"/>
</dbReference>
<dbReference type="GO" id="GO:0000149">
    <property type="term" value="F:SNARE binding"/>
    <property type="evidence" value="ECO:0000353"/>
    <property type="project" value="RGD"/>
</dbReference>
<dbReference type="GO" id="GO:0017075">
    <property type="term" value="F:syntaxin-1 binding"/>
    <property type="evidence" value="ECO:0000353"/>
    <property type="project" value="RGD"/>
</dbReference>
<dbReference type="GO" id="GO:0017156">
    <property type="term" value="P:calcium-ion regulated exocytosis"/>
    <property type="evidence" value="ECO:0000266"/>
    <property type="project" value="RGD"/>
</dbReference>
<dbReference type="GO" id="GO:0071346">
    <property type="term" value="P:cellular response to type II interferon"/>
    <property type="evidence" value="ECO:0000266"/>
    <property type="project" value="RGD"/>
</dbReference>
<dbReference type="GO" id="GO:0051649">
    <property type="term" value="P:establishment of localization in cell"/>
    <property type="evidence" value="ECO:0000266"/>
    <property type="project" value="RGD"/>
</dbReference>
<dbReference type="GO" id="GO:0043001">
    <property type="term" value="P:Golgi to plasma membrane protein transport"/>
    <property type="evidence" value="ECO:0000266"/>
    <property type="project" value="RGD"/>
</dbReference>
<dbReference type="GO" id="GO:1903531">
    <property type="term" value="P:negative regulation of secretion by cell"/>
    <property type="evidence" value="ECO:0000266"/>
    <property type="project" value="RGD"/>
</dbReference>
<dbReference type="GO" id="GO:0001921">
    <property type="term" value="P:positive regulation of receptor recycling"/>
    <property type="evidence" value="ECO:0000250"/>
    <property type="project" value="UniProtKB"/>
</dbReference>
<dbReference type="GO" id="GO:0065003">
    <property type="term" value="P:protein-containing complex assembly"/>
    <property type="evidence" value="ECO:0000314"/>
    <property type="project" value="RGD"/>
</dbReference>
<dbReference type="GO" id="GO:0042147">
    <property type="term" value="P:retrograde transport, endosome to Golgi"/>
    <property type="evidence" value="ECO:0000250"/>
    <property type="project" value="UniProtKB"/>
</dbReference>
<dbReference type="GO" id="GO:0035493">
    <property type="term" value="P:SNARE complex assembly"/>
    <property type="evidence" value="ECO:0000266"/>
    <property type="project" value="RGD"/>
</dbReference>
<dbReference type="GO" id="GO:0034446">
    <property type="term" value="P:substrate adhesion-dependent cell spreading"/>
    <property type="evidence" value="ECO:0000250"/>
    <property type="project" value="UniProtKB"/>
</dbReference>
<dbReference type="GO" id="GO:0006906">
    <property type="term" value="P:vesicle fusion"/>
    <property type="evidence" value="ECO:0000318"/>
    <property type="project" value="GO_Central"/>
</dbReference>
<dbReference type="GO" id="GO:0016192">
    <property type="term" value="P:vesicle-mediated transport"/>
    <property type="evidence" value="ECO:0000250"/>
    <property type="project" value="UniProtKB"/>
</dbReference>
<dbReference type="CDD" id="cd15870">
    <property type="entry name" value="R-SNARE_VAMP2"/>
    <property type="match status" value="1"/>
</dbReference>
<dbReference type="FunFam" id="1.20.5.110:FF:000013">
    <property type="entry name" value="Vesicle-associated membrane protein 2"/>
    <property type="match status" value="1"/>
</dbReference>
<dbReference type="Gene3D" id="1.20.5.110">
    <property type="match status" value="1"/>
</dbReference>
<dbReference type="InterPro" id="IPR001388">
    <property type="entry name" value="Synaptobrevin-like"/>
</dbReference>
<dbReference type="InterPro" id="IPR016444">
    <property type="entry name" value="Synaptobrevin/VAMP"/>
</dbReference>
<dbReference type="InterPro" id="IPR042855">
    <property type="entry name" value="V_SNARE_CC"/>
</dbReference>
<dbReference type="PANTHER" id="PTHR45701">
    <property type="entry name" value="SYNAPTOBREVIN FAMILY MEMBER"/>
    <property type="match status" value="1"/>
</dbReference>
<dbReference type="Pfam" id="PF00957">
    <property type="entry name" value="Synaptobrevin"/>
    <property type="match status" value="1"/>
</dbReference>
<dbReference type="PIRSF" id="PIRSF005409">
    <property type="entry name" value="Synaptobrevin_euk"/>
    <property type="match status" value="1"/>
</dbReference>
<dbReference type="PRINTS" id="PR00219">
    <property type="entry name" value="SYNAPTOBREVN"/>
</dbReference>
<dbReference type="SUPFAM" id="SSF58038">
    <property type="entry name" value="SNARE fusion complex"/>
    <property type="match status" value="1"/>
</dbReference>
<dbReference type="PROSITE" id="PS00417">
    <property type="entry name" value="SYNAPTOBREVIN"/>
    <property type="match status" value="1"/>
</dbReference>
<dbReference type="PROSITE" id="PS50892">
    <property type="entry name" value="V_SNARE"/>
    <property type="match status" value="1"/>
</dbReference>
<evidence type="ECO:0000250" key="1">
    <source>
        <dbReference type="UniProtKB" id="P63024"/>
    </source>
</evidence>
<evidence type="ECO:0000250" key="2">
    <source>
        <dbReference type="UniProtKB" id="Q15836"/>
    </source>
</evidence>
<evidence type="ECO:0000255" key="3"/>
<evidence type="ECO:0000255" key="4">
    <source>
        <dbReference type="PROSITE-ProRule" id="PRU00290"/>
    </source>
</evidence>
<evidence type="ECO:0000256" key="5">
    <source>
        <dbReference type="SAM" id="MobiDB-lite"/>
    </source>
</evidence>
<evidence type="ECO:0000269" key="6">
    <source>
    </source>
</evidence>
<evidence type="ECO:0000269" key="7">
    <source>
    </source>
</evidence>
<evidence type="ECO:0000303" key="8">
    <source>
    </source>
</evidence>
<evidence type="ECO:0000305" key="9"/>
<evidence type="ECO:0007829" key="10">
    <source>
        <dbReference type="PDB" id="5KJ7"/>
    </source>
</evidence>
<name>VAMP3_RAT</name>
<proteinExistence type="evidence at protein level"/>
<keyword id="KW-0002">3D-structure</keyword>
<keyword id="KW-0175">Coiled coil</keyword>
<keyword id="KW-0967">Endosome</keyword>
<keyword id="KW-1017">Isopeptide bond</keyword>
<keyword id="KW-0472">Membrane</keyword>
<keyword id="KW-0653">Protein transport</keyword>
<keyword id="KW-1185">Reference proteome</keyword>
<keyword id="KW-0770">Synapse</keyword>
<keyword id="KW-0771">Synaptosome</keyword>
<keyword id="KW-0812">Transmembrane</keyword>
<keyword id="KW-1133">Transmembrane helix</keyword>
<keyword id="KW-0813">Transport</keyword>
<keyword id="KW-0832">Ubl conjugation</keyword>
<sequence length="103" mass="11480">MSTGVPSGSSAATGSNRRLQQTQNQVDEVVDIMRVNVDKVLERDQKLSELDDRADALQAGASQFETSAAKLKRKYWWKNCKMWAIGISVLVIIVIIIIVWCVS</sequence>
<comment type="function">
    <text evidence="2">SNARE involved in vesicular transport from the late endosomes to the trans-Golgi network.</text>
</comment>
<comment type="subunit">
    <text evidence="1 2">Interacts with POPDC1 (via the C-terminus cytoplasmic tail). Interacts with BCAP31; involved in VAMP3 export from the endoplasmic reticulum (By similarity). Interacts with BAIAP3; this interaction is increased in the presence of calcium (By similarity). Interacts with PICALM (By similarity).</text>
</comment>
<comment type="interaction">
    <interactant intactId="EBI-7705696">
        <id>P63025</id>
    </interactant>
    <interactant intactId="EBI-7705661">
        <id>Q9ES83</id>
        <label>Bves</label>
    </interactant>
    <organismsDiffer>true</organismsDiffer>
    <experiments>3</experiments>
</comment>
<comment type="subcellular location">
    <subcellularLocation>
        <location evidence="2">Early endosome membrane</location>
        <topology evidence="3">Single-pass type IV membrane protein</topology>
    </subcellularLocation>
    <subcellularLocation>
        <location evidence="2">Recycling endosome membrane</location>
        <topology evidence="3">Single-pass type IV membrane protein</topology>
    </subcellularLocation>
    <subcellularLocation>
        <location evidence="2">Synapse</location>
        <location evidence="2">Synaptosome</location>
    </subcellularLocation>
</comment>
<comment type="tissue specificity">
    <text evidence="7">Ubiquitous.</text>
</comment>
<comment type="PTM">
    <text evidence="2">Ubiquitinated by RNF167 at Lys-70, Lys-72 and Lys-81, regulating the recycling endosome pathway.</text>
</comment>
<comment type="PTM">
    <text evidence="6">(Microbial infection) Targeted and hydrolyzed by C.botulinum neurotoxin type D (BoNT/D, botD) which hydrolyzes the 46-Lys-|-Leu-47 bond and probably inhibits neurotransmitter release (PubMed:8175689).</text>
</comment>
<comment type="PTM">
    <text evidence="6">(Microbial infection) Targeted and hydrolyzed by C.botulinum neurotoxin type F (BoNT/F, botF) which hydrolyzes the 45-Gln-|-Lys-46 bond and probably inhibits neurotransmitter release (PubMed:8175689).</text>
</comment>
<comment type="PTM">
    <text evidence="6">(Microbial infection) Targeted and hydrolyzed by C.tetani toxin (tetX) which hydrolyzes the 63-Gln-|-Phe-64 bond and probably inhibits neurotransmitter release (PubMed:8175689).</text>
</comment>
<comment type="similarity">
    <text evidence="9">Belongs to the synaptobrevin family.</text>
</comment>
<protein>
    <recommendedName>
        <fullName>Vesicle-associated membrane protein 3</fullName>
        <shortName>VAMP-3</shortName>
    </recommendedName>
    <alternativeName>
        <fullName evidence="8">Cellubrevin</fullName>
        <shortName>CEB</shortName>
    </alternativeName>
    <alternativeName>
        <fullName>Synaptobrevin-3</fullName>
    </alternativeName>
</protein>
<reference key="1">
    <citation type="journal article" date="1993" name="Nature">
        <title>Cellubrevin is a ubiquitous tetanus-toxin substrate homologous to a putative synaptic vesicle fusion protein.</title>
        <authorList>
            <person name="McMahon H.T."/>
            <person name="Ushkaryov Y.A."/>
            <person name="Edelmann L."/>
            <person name="Link E."/>
            <person name="Binz T."/>
            <person name="Niemann H."/>
            <person name="Jahn R."/>
            <person name="Suedhof T.C."/>
        </authorList>
    </citation>
    <scope>NUCLEOTIDE SEQUENCE [MRNA]</scope>
    <scope>TISSUE SPECIFICITY</scope>
</reference>
<reference key="2">
    <citation type="journal article" date="2004" name="Genome Res.">
        <title>The status, quality, and expansion of the NIH full-length cDNA project: the Mammalian Gene Collection (MGC).</title>
        <authorList>
            <consortium name="The MGC Project Team"/>
        </authorList>
    </citation>
    <scope>NUCLEOTIDE SEQUENCE [LARGE SCALE MRNA]</scope>
    <source>
        <tissue>Spleen</tissue>
    </source>
</reference>
<reference key="3">
    <citation type="journal article" date="1994" name="J. Biol. Chem.">
        <title>Cleavage of members of the synaptobrevin/VAMP family by types D and F botulinal neurotoxins and tetanus toxin.</title>
        <authorList>
            <person name="Yamasaki S."/>
            <person name="Baumeister A."/>
            <person name="Binz T."/>
            <person name="Blasi J."/>
            <person name="Link E."/>
            <person name="Cornille F."/>
            <person name="Roques B."/>
            <person name="Fykse E.M."/>
            <person name="Suedhof T.C."/>
            <person name="Jahn R."/>
            <person name="Niemann H."/>
        </authorList>
    </citation>
    <scope>PROTEOLYTIC CLEAVAGE (MICROBIAL INFECTION) BY C.BOTULINUM NEUROTOXIN TYPES D AND F AND BY C.TETANI TETANUS TOXIN</scope>
</reference>
<reference key="4">
    <citation type="journal article" date="2012" name="Nat. Commun.">
        <title>Quantitative maps of protein phosphorylation sites across 14 different rat organs and tissues.</title>
        <authorList>
            <person name="Lundby A."/>
            <person name="Secher A."/>
            <person name="Lage K."/>
            <person name="Nordsborg N.B."/>
            <person name="Dmytriyev A."/>
            <person name="Lundby C."/>
            <person name="Olsen J.V."/>
        </authorList>
    </citation>
    <scope>IDENTIFICATION BY MASS SPECTROMETRY [LARGE SCALE ANALYSIS]</scope>
</reference>
<gene>
    <name type="primary">Vamp3</name>
    <name type="synonym">Syb3</name>
</gene>
<organism>
    <name type="scientific">Rattus norvegicus</name>
    <name type="common">Rat</name>
    <dbReference type="NCBI Taxonomy" id="10116"/>
    <lineage>
        <taxon>Eukaryota</taxon>
        <taxon>Metazoa</taxon>
        <taxon>Chordata</taxon>
        <taxon>Craniata</taxon>
        <taxon>Vertebrata</taxon>
        <taxon>Euteleostomi</taxon>
        <taxon>Mammalia</taxon>
        <taxon>Eutheria</taxon>
        <taxon>Euarchontoglires</taxon>
        <taxon>Glires</taxon>
        <taxon>Rodentia</taxon>
        <taxon>Myomorpha</taxon>
        <taxon>Muroidea</taxon>
        <taxon>Muridae</taxon>
        <taxon>Murinae</taxon>
        <taxon>Rattus</taxon>
    </lineage>
</organism>
<accession>P63025</accession>
<accession>Q64271</accession>